<reference key="1">
    <citation type="journal article" date="2008" name="Proc. Natl. Acad. Sci. U.S.A.">
        <title>Niche adaptation and genome expansion in the chlorophyll d-producing cyanobacterium Acaryochloris marina.</title>
        <authorList>
            <person name="Swingley W.D."/>
            <person name="Chen M."/>
            <person name="Cheung P.C."/>
            <person name="Conrad A.L."/>
            <person name="Dejesa L.C."/>
            <person name="Hao J."/>
            <person name="Honchak B.M."/>
            <person name="Karbach L.E."/>
            <person name="Kurdoglu A."/>
            <person name="Lahiri S."/>
            <person name="Mastrian S.D."/>
            <person name="Miyashita H."/>
            <person name="Page L."/>
            <person name="Ramakrishna P."/>
            <person name="Satoh S."/>
            <person name="Sattley W.M."/>
            <person name="Shimada Y."/>
            <person name="Taylor H.L."/>
            <person name="Tomo T."/>
            <person name="Tsuchiya T."/>
            <person name="Wang Z.T."/>
            <person name="Raymond J."/>
            <person name="Mimuro M."/>
            <person name="Blankenship R.E."/>
            <person name="Touchman J.W."/>
        </authorList>
    </citation>
    <scope>NUCLEOTIDE SEQUENCE [LARGE SCALE GENOMIC DNA]</scope>
    <source>
        <strain>MBIC 11017</strain>
    </source>
</reference>
<gene>
    <name evidence="1" type="primary">ruvA</name>
    <name type="ordered locus">AM1_2883</name>
</gene>
<evidence type="ECO:0000255" key="1">
    <source>
        <dbReference type="HAMAP-Rule" id="MF_00031"/>
    </source>
</evidence>
<dbReference type="EMBL" id="CP000828">
    <property type="protein sequence ID" value="ABW27882.1"/>
    <property type="molecule type" value="Genomic_DNA"/>
</dbReference>
<dbReference type="RefSeq" id="WP_012163319.1">
    <property type="nucleotide sequence ID" value="NC_009925.1"/>
</dbReference>
<dbReference type="SMR" id="B0CAE7"/>
<dbReference type="STRING" id="329726.AM1_2883"/>
<dbReference type="KEGG" id="amr:AM1_2883"/>
<dbReference type="eggNOG" id="COG0632">
    <property type="taxonomic scope" value="Bacteria"/>
</dbReference>
<dbReference type="HOGENOM" id="CLU_087936_0_0_3"/>
<dbReference type="OrthoDB" id="5293449at2"/>
<dbReference type="Proteomes" id="UP000000268">
    <property type="component" value="Chromosome"/>
</dbReference>
<dbReference type="GO" id="GO:0005737">
    <property type="term" value="C:cytoplasm"/>
    <property type="evidence" value="ECO:0007669"/>
    <property type="project" value="UniProtKB-SubCell"/>
</dbReference>
<dbReference type="GO" id="GO:0009379">
    <property type="term" value="C:Holliday junction helicase complex"/>
    <property type="evidence" value="ECO:0007669"/>
    <property type="project" value="InterPro"/>
</dbReference>
<dbReference type="GO" id="GO:0048476">
    <property type="term" value="C:Holliday junction resolvase complex"/>
    <property type="evidence" value="ECO:0007669"/>
    <property type="project" value="UniProtKB-UniRule"/>
</dbReference>
<dbReference type="GO" id="GO:0005524">
    <property type="term" value="F:ATP binding"/>
    <property type="evidence" value="ECO:0007669"/>
    <property type="project" value="InterPro"/>
</dbReference>
<dbReference type="GO" id="GO:0000400">
    <property type="term" value="F:four-way junction DNA binding"/>
    <property type="evidence" value="ECO:0007669"/>
    <property type="project" value="UniProtKB-UniRule"/>
</dbReference>
<dbReference type="GO" id="GO:0009378">
    <property type="term" value="F:four-way junction helicase activity"/>
    <property type="evidence" value="ECO:0007669"/>
    <property type="project" value="InterPro"/>
</dbReference>
<dbReference type="GO" id="GO:0006310">
    <property type="term" value="P:DNA recombination"/>
    <property type="evidence" value="ECO:0007669"/>
    <property type="project" value="UniProtKB-UniRule"/>
</dbReference>
<dbReference type="GO" id="GO:0006281">
    <property type="term" value="P:DNA repair"/>
    <property type="evidence" value="ECO:0007669"/>
    <property type="project" value="UniProtKB-UniRule"/>
</dbReference>
<dbReference type="CDD" id="cd14332">
    <property type="entry name" value="UBA_RuvA_C"/>
    <property type="match status" value="1"/>
</dbReference>
<dbReference type="Gene3D" id="1.10.150.20">
    <property type="entry name" value="5' to 3' exonuclease, C-terminal subdomain"/>
    <property type="match status" value="1"/>
</dbReference>
<dbReference type="Gene3D" id="1.10.8.10">
    <property type="entry name" value="DNA helicase RuvA subunit, C-terminal domain"/>
    <property type="match status" value="1"/>
</dbReference>
<dbReference type="Gene3D" id="2.40.50.140">
    <property type="entry name" value="Nucleic acid-binding proteins"/>
    <property type="match status" value="1"/>
</dbReference>
<dbReference type="HAMAP" id="MF_00031">
    <property type="entry name" value="DNA_HJ_migration_RuvA"/>
    <property type="match status" value="1"/>
</dbReference>
<dbReference type="InterPro" id="IPR013849">
    <property type="entry name" value="DNA_helicase_Holl-junc_RuvA_I"/>
</dbReference>
<dbReference type="InterPro" id="IPR003583">
    <property type="entry name" value="Hlx-hairpin-Hlx_DNA-bd_motif"/>
</dbReference>
<dbReference type="InterPro" id="IPR012340">
    <property type="entry name" value="NA-bd_OB-fold"/>
</dbReference>
<dbReference type="InterPro" id="IPR000085">
    <property type="entry name" value="RuvA"/>
</dbReference>
<dbReference type="InterPro" id="IPR010994">
    <property type="entry name" value="RuvA_2-like"/>
</dbReference>
<dbReference type="InterPro" id="IPR011114">
    <property type="entry name" value="RuvA_C"/>
</dbReference>
<dbReference type="InterPro" id="IPR036267">
    <property type="entry name" value="RuvA_C_sf"/>
</dbReference>
<dbReference type="NCBIfam" id="TIGR00084">
    <property type="entry name" value="ruvA"/>
    <property type="match status" value="1"/>
</dbReference>
<dbReference type="Pfam" id="PF14520">
    <property type="entry name" value="HHH_5"/>
    <property type="match status" value="1"/>
</dbReference>
<dbReference type="Pfam" id="PF07499">
    <property type="entry name" value="RuvA_C"/>
    <property type="match status" value="1"/>
</dbReference>
<dbReference type="Pfam" id="PF01330">
    <property type="entry name" value="RuvA_N"/>
    <property type="match status" value="1"/>
</dbReference>
<dbReference type="SMART" id="SM00278">
    <property type="entry name" value="HhH1"/>
    <property type="match status" value="2"/>
</dbReference>
<dbReference type="SUPFAM" id="SSF46929">
    <property type="entry name" value="DNA helicase RuvA subunit, C-terminal domain"/>
    <property type="match status" value="1"/>
</dbReference>
<dbReference type="SUPFAM" id="SSF50249">
    <property type="entry name" value="Nucleic acid-binding proteins"/>
    <property type="match status" value="1"/>
</dbReference>
<dbReference type="SUPFAM" id="SSF47781">
    <property type="entry name" value="RuvA domain 2-like"/>
    <property type="match status" value="1"/>
</dbReference>
<feature type="chain" id="PRO_1000074407" description="Holliday junction branch migration complex subunit RuvA">
    <location>
        <begin position="1"/>
        <end position="208"/>
    </location>
</feature>
<feature type="region of interest" description="Domain I" evidence="1">
    <location>
        <begin position="1"/>
        <end position="69"/>
    </location>
</feature>
<feature type="region of interest" description="Domain II" evidence="1">
    <location>
        <begin position="70"/>
        <end position="148"/>
    </location>
</feature>
<feature type="region of interest" description="Flexible linker" evidence="1">
    <location>
        <begin position="149"/>
        <end position="159"/>
    </location>
</feature>
<feature type="region of interest" description="Domain III" evidence="1">
    <location>
        <begin position="159"/>
        <end position="208"/>
    </location>
</feature>
<sequence>MIGFLQGYVVSLQQTSTHRTLLTLDVNQVGYDLYVPSRIRQHLPPDQEQMRVFTHLQVREDQMVLFGFAVVAERDLFRQLIAVSGIGPQLALALIDTLGLQDLVQAIVNSNTKMLVKTPGVGAKTAERIALELRSKLAEWRDQAGLKTLPSAGPIDSVQEDVEMTLLALGYTSQEVMRALQAVGQNTALAKNSDTEAWIREAIAWLSQ</sequence>
<proteinExistence type="inferred from homology"/>
<organism>
    <name type="scientific">Acaryochloris marina (strain MBIC 11017)</name>
    <dbReference type="NCBI Taxonomy" id="329726"/>
    <lineage>
        <taxon>Bacteria</taxon>
        <taxon>Bacillati</taxon>
        <taxon>Cyanobacteriota</taxon>
        <taxon>Cyanophyceae</taxon>
        <taxon>Acaryochloridales</taxon>
        <taxon>Acaryochloridaceae</taxon>
        <taxon>Acaryochloris</taxon>
    </lineage>
</organism>
<comment type="function">
    <text evidence="1">The RuvA-RuvB-RuvC complex processes Holliday junction (HJ) DNA during genetic recombination and DNA repair, while the RuvA-RuvB complex plays an important role in the rescue of blocked DNA replication forks via replication fork reversal (RFR). RuvA specifically binds to HJ cruciform DNA, conferring on it an open structure. The RuvB hexamer acts as an ATP-dependent pump, pulling dsDNA into and through the RuvAB complex. HJ branch migration allows RuvC to scan DNA until it finds its consensus sequence, where it cleaves and resolves the cruciform DNA.</text>
</comment>
<comment type="subunit">
    <text evidence="1">Homotetramer. Forms an RuvA(8)-RuvB(12)-Holliday junction (HJ) complex. HJ DNA is sandwiched between 2 RuvA tetramers; dsDNA enters through RuvA and exits via RuvB. An RuvB hexamer assembles on each DNA strand where it exits the tetramer. Each RuvB hexamer is contacted by two RuvA subunits (via domain III) on 2 adjacent RuvB subunits; this complex drives branch migration. In the full resolvosome a probable DNA-RuvA(4)-RuvB(12)-RuvC(2) complex forms which resolves the HJ.</text>
</comment>
<comment type="subcellular location">
    <subcellularLocation>
        <location evidence="1">Cytoplasm</location>
    </subcellularLocation>
</comment>
<comment type="domain">
    <text evidence="1">Has three domains with a flexible linker between the domains II and III and assumes an 'L' shape. Domain III is highly mobile and contacts RuvB.</text>
</comment>
<comment type="similarity">
    <text evidence="1">Belongs to the RuvA family.</text>
</comment>
<protein>
    <recommendedName>
        <fullName evidence="1">Holliday junction branch migration complex subunit RuvA</fullName>
    </recommendedName>
</protein>
<keyword id="KW-0963">Cytoplasm</keyword>
<keyword id="KW-0227">DNA damage</keyword>
<keyword id="KW-0233">DNA recombination</keyword>
<keyword id="KW-0234">DNA repair</keyword>
<keyword id="KW-0238">DNA-binding</keyword>
<keyword id="KW-1185">Reference proteome</keyword>
<accession>B0CAE7</accession>
<name>RUVA_ACAM1</name>